<comment type="function">
    <text evidence="1">Required for accurate and efficient protein synthesis under certain stress conditions. May act as a fidelity factor of the translation reaction, by catalyzing a one-codon backward translocation of tRNAs on improperly translocated ribosomes. Back-translocation proceeds from a post-translocation (POST) complex to a pre-translocation (PRE) complex, thus giving elongation factor G a second chance to translocate the tRNAs correctly. Binds to ribosomes in a GTP-dependent manner.</text>
</comment>
<comment type="catalytic activity">
    <reaction evidence="1">
        <text>GTP + H2O = GDP + phosphate + H(+)</text>
        <dbReference type="Rhea" id="RHEA:19669"/>
        <dbReference type="ChEBI" id="CHEBI:15377"/>
        <dbReference type="ChEBI" id="CHEBI:15378"/>
        <dbReference type="ChEBI" id="CHEBI:37565"/>
        <dbReference type="ChEBI" id="CHEBI:43474"/>
        <dbReference type="ChEBI" id="CHEBI:58189"/>
        <dbReference type="EC" id="3.6.5.n1"/>
    </reaction>
</comment>
<comment type="subcellular location">
    <subcellularLocation>
        <location evidence="1">Cell inner membrane</location>
        <topology evidence="1">Peripheral membrane protein</topology>
        <orientation evidence="1">Cytoplasmic side</orientation>
    </subcellularLocation>
</comment>
<comment type="similarity">
    <text evidence="1">Belongs to the TRAFAC class translation factor GTPase superfamily. Classic translation factor GTPase family. LepA subfamily.</text>
</comment>
<sequence length="603" mass="67074">MTGVPVSRIRNFSIIAHIDHGKSTLADRLLQETGTVSAREMRPQLLDSMELERERGITIKLQAARMNYRAQDGQDYVLNLIDTPGHVDFTYEVSRSLAACEGALLVVDASQGVEAQTLANVYLALENNLEIIPVINKIDLPGAEPERVIAEIEQVIGLDCSGAILASAKVGIGIQEILEAVVQRVPPPRDTVAEPLRALIFDSYYDAYRGVIVYVRIMDGEVKTGDKICFMASGREYEITELGVMRPNQEPVDALHAGEVGYMAAAIKSVEHARVGDTITLVNRKAPEPLPGYKEAKPMVFCGLFPSSSDQYAELKEALEKLKLNDAALYFEPEISSAMGFGFRCGFLGLLHMEVVQERLEREYNLDLVITAPTVVYQVTLNNGSVIRVDNPSKLPPPNERTSIEEPIVRVEVILPEEFVGTVMELCETKRGTFKDMKYLAQGRTTLVYELPLAEVVTDFFDQLKSRTRGYASMDYQMIGYRADDLVRLDILINGDVVDSLSTIVHRDKAFYVGRSLVAKLRELIPRHQFEVPIQAAIGSKVIARETIPALRKNVLAKCYGGDVTRKRKLLEKQKEGKKRMKAVGTVDVPQEAFMAVLKLQND</sequence>
<organism>
    <name type="scientific">Synechococcus sp. (strain JA-2-3B'a(2-13))</name>
    <name type="common">Cyanobacteria bacterium Yellowstone B-Prime</name>
    <dbReference type="NCBI Taxonomy" id="321332"/>
    <lineage>
        <taxon>Bacteria</taxon>
        <taxon>Bacillati</taxon>
        <taxon>Cyanobacteriota</taxon>
        <taxon>Cyanophyceae</taxon>
        <taxon>Synechococcales</taxon>
        <taxon>Synechococcaceae</taxon>
        <taxon>Synechococcus</taxon>
    </lineage>
</organism>
<accession>Q2JQ51</accession>
<dbReference type="EC" id="3.6.5.n1" evidence="1"/>
<dbReference type="EMBL" id="CP000240">
    <property type="protein sequence ID" value="ABD01065.1"/>
    <property type="molecule type" value="Genomic_DNA"/>
</dbReference>
<dbReference type="RefSeq" id="WP_011431736.1">
    <property type="nucleotide sequence ID" value="NC_007776.1"/>
</dbReference>
<dbReference type="SMR" id="Q2JQ51"/>
<dbReference type="STRING" id="321332.CYB_0064"/>
<dbReference type="KEGG" id="cyb:CYB_0064"/>
<dbReference type="eggNOG" id="COG0481">
    <property type="taxonomic scope" value="Bacteria"/>
</dbReference>
<dbReference type="HOGENOM" id="CLU_009995_3_3_3"/>
<dbReference type="OrthoDB" id="580826at2"/>
<dbReference type="Proteomes" id="UP000001938">
    <property type="component" value="Chromosome"/>
</dbReference>
<dbReference type="GO" id="GO:0005886">
    <property type="term" value="C:plasma membrane"/>
    <property type="evidence" value="ECO:0007669"/>
    <property type="project" value="UniProtKB-SubCell"/>
</dbReference>
<dbReference type="GO" id="GO:0005525">
    <property type="term" value="F:GTP binding"/>
    <property type="evidence" value="ECO:0007669"/>
    <property type="project" value="UniProtKB-KW"/>
</dbReference>
<dbReference type="GO" id="GO:0003924">
    <property type="term" value="F:GTPase activity"/>
    <property type="evidence" value="ECO:0007669"/>
    <property type="project" value="InterPro"/>
</dbReference>
<dbReference type="GO" id="GO:0043022">
    <property type="term" value="F:ribosome binding"/>
    <property type="evidence" value="ECO:0007669"/>
    <property type="project" value="TreeGrafter"/>
</dbReference>
<dbReference type="GO" id="GO:0045727">
    <property type="term" value="P:positive regulation of translation"/>
    <property type="evidence" value="ECO:0007669"/>
    <property type="project" value="TreeGrafter"/>
</dbReference>
<dbReference type="GO" id="GO:0006412">
    <property type="term" value="P:translation"/>
    <property type="evidence" value="ECO:0007669"/>
    <property type="project" value="UniProtKB-KW"/>
</dbReference>
<dbReference type="CDD" id="cd03699">
    <property type="entry name" value="EF4_II"/>
    <property type="match status" value="1"/>
</dbReference>
<dbReference type="CDD" id="cd16260">
    <property type="entry name" value="EF4_III"/>
    <property type="match status" value="1"/>
</dbReference>
<dbReference type="CDD" id="cd01890">
    <property type="entry name" value="LepA"/>
    <property type="match status" value="1"/>
</dbReference>
<dbReference type="CDD" id="cd03709">
    <property type="entry name" value="lepA_C"/>
    <property type="match status" value="1"/>
</dbReference>
<dbReference type="FunFam" id="3.40.50.300:FF:000078">
    <property type="entry name" value="Elongation factor 4"/>
    <property type="match status" value="1"/>
</dbReference>
<dbReference type="FunFam" id="2.40.30.10:FF:000015">
    <property type="entry name" value="Translation factor GUF1, mitochondrial"/>
    <property type="match status" value="1"/>
</dbReference>
<dbReference type="FunFam" id="3.30.70.240:FF:000007">
    <property type="entry name" value="Translation factor GUF1, mitochondrial"/>
    <property type="match status" value="1"/>
</dbReference>
<dbReference type="FunFam" id="3.30.70.2570:FF:000001">
    <property type="entry name" value="Translation factor GUF1, mitochondrial"/>
    <property type="match status" value="1"/>
</dbReference>
<dbReference type="FunFam" id="3.30.70.870:FF:000004">
    <property type="entry name" value="Translation factor GUF1, mitochondrial"/>
    <property type="match status" value="1"/>
</dbReference>
<dbReference type="Gene3D" id="3.30.70.240">
    <property type="match status" value="1"/>
</dbReference>
<dbReference type="Gene3D" id="3.30.70.2570">
    <property type="entry name" value="Elongation factor 4, C-terminal domain"/>
    <property type="match status" value="1"/>
</dbReference>
<dbReference type="Gene3D" id="3.30.70.870">
    <property type="entry name" value="Elongation Factor G (Translational Gtpase), domain 3"/>
    <property type="match status" value="1"/>
</dbReference>
<dbReference type="Gene3D" id="3.40.50.300">
    <property type="entry name" value="P-loop containing nucleotide triphosphate hydrolases"/>
    <property type="match status" value="1"/>
</dbReference>
<dbReference type="Gene3D" id="2.40.30.10">
    <property type="entry name" value="Translation factors"/>
    <property type="match status" value="1"/>
</dbReference>
<dbReference type="HAMAP" id="MF_03138">
    <property type="entry name" value="GUFP"/>
    <property type="match status" value="1"/>
</dbReference>
<dbReference type="HAMAP" id="MF_00071">
    <property type="entry name" value="LepA"/>
    <property type="match status" value="1"/>
</dbReference>
<dbReference type="InterPro" id="IPR006297">
    <property type="entry name" value="EF-4"/>
</dbReference>
<dbReference type="InterPro" id="IPR035647">
    <property type="entry name" value="EFG_III/V"/>
</dbReference>
<dbReference type="InterPro" id="IPR000640">
    <property type="entry name" value="EFG_V-like"/>
</dbReference>
<dbReference type="InterPro" id="IPR004161">
    <property type="entry name" value="EFTu-like_2"/>
</dbReference>
<dbReference type="InterPro" id="IPR031157">
    <property type="entry name" value="G_TR_CS"/>
</dbReference>
<dbReference type="InterPro" id="IPR027518">
    <property type="entry name" value="GUFP"/>
</dbReference>
<dbReference type="InterPro" id="IPR038363">
    <property type="entry name" value="LepA_C_sf"/>
</dbReference>
<dbReference type="InterPro" id="IPR013842">
    <property type="entry name" value="LepA_CTD"/>
</dbReference>
<dbReference type="InterPro" id="IPR035654">
    <property type="entry name" value="LepA_IV"/>
</dbReference>
<dbReference type="InterPro" id="IPR027417">
    <property type="entry name" value="P-loop_NTPase"/>
</dbReference>
<dbReference type="InterPro" id="IPR005225">
    <property type="entry name" value="Small_GTP-bd"/>
</dbReference>
<dbReference type="InterPro" id="IPR000795">
    <property type="entry name" value="T_Tr_GTP-bd_dom"/>
</dbReference>
<dbReference type="NCBIfam" id="TIGR01393">
    <property type="entry name" value="lepA"/>
    <property type="match status" value="1"/>
</dbReference>
<dbReference type="NCBIfam" id="TIGR00231">
    <property type="entry name" value="small_GTP"/>
    <property type="match status" value="1"/>
</dbReference>
<dbReference type="PANTHER" id="PTHR43512:SF4">
    <property type="entry name" value="TRANSLATION FACTOR GUF1 HOMOLOG, CHLOROPLASTIC"/>
    <property type="match status" value="1"/>
</dbReference>
<dbReference type="PANTHER" id="PTHR43512">
    <property type="entry name" value="TRANSLATION FACTOR GUF1-RELATED"/>
    <property type="match status" value="1"/>
</dbReference>
<dbReference type="Pfam" id="PF00679">
    <property type="entry name" value="EFG_C"/>
    <property type="match status" value="1"/>
</dbReference>
<dbReference type="Pfam" id="PF00009">
    <property type="entry name" value="GTP_EFTU"/>
    <property type="match status" value="1"/>
</dbReference>
<dbReference type="Pfam" id="PF03144">
    <property type="entry name" value="GTP_EFTU_D2"/>
    <property type="match status" value="1"/>
</dbReference>
<dbReference type="Pfam" id="PF06421">
    <property type="entry name" value="LepA_C"/>
    <property type="match status" value="1"/>
</dbReference>
<dbReference type="PRINTS" id="PR00315">
    <property type="entry name" value="ELONGATNFCT"/>
</dbReference>
<dbReference type="SMART" id="SM00838">
    <property type="entry name" value="EFG_C"/>
    <property type="match status" value="1"/>
</dbReference>
<dbReference type="SUPFAM" id="SSF54980">
    <property type="entry name" value="EF-G C-terminal domain-like"/>
    <property type="match status" value="2"/>
</dbReference>
<dbReference type="SUPFAM" id="SSF52540">
    <property type="entry name" value="P-loop containing nucleoside triphosphate hydrolases"/>
    <property type="match status" value="1"/>
</dbReference>
<dbReference type="PROSITE" id="PS00301">
    <property type="entry name" value="G_TR_1"/>
    <property type="match status" value="1"/>
</dbReference>
<dbReference type="PROSITE" id="PS51722">
    <property type="entry name" value="G_TR_2"/>
    <property type="match status" value="1"/>
</dbReference>
<protein>
    <recommendedName>
        <fullName evidence="1">Elongation factor 4</fullName>
        <shortName evidence="1">EF-4</shortName>
        <ecNumber evidence="1">3.6.5.n1</ecNumber>
    </recommendedName>
    <alternativeName>
        <fullName evidence="1">Ribosomal back-translocase LepA</fullName>
    </alternativeName>
</protein>
<keyword id="KW-0997">Cell inner membrane</keyword>
<keyword id="KW-1003">Cell membrane</keyword>
<keyword id="KW-0342">GTP-binding</keyword>
<keyword id="KW-0378">Hydrolase</keyword>
<keyword id="KW-0472">Membrane</keyword>
<keyword id="KW-0547">Nucleotide-binding</keyword>
<keyword id="KW-0648">Protein biosynthesis</keyword>
<keyword id="KW-1185">Reference proteome</keyword>
<feature type="chain" id="PRO_0000265717" description="Elongation factor 4">
    <location>
        <begin position="1"/>
        <end position="603"/>
    </location>
</feature>
<feature type="domain" description="tr-type G">
    <location>
        <begin position="7"/>
        <end position="189"/>
    </location>
</feature>
<feature type="binding site" evidence="1">
    <location>
        <begin position="19"/>
        <end position="24"/>
    </location>
    <ligand>
        <name>GTP</name>
        <dbReference type="ChEBI" id="CHEBI:37565"/>
    </ligand>
</feature>
<feature type="binding site" evidence="1">
    <location>
        <begin position="136"/>
        <end position="139"/>
    </location>
    <ligand>
        <name>GTP</name>
        <dbReference type="ChEBI" id="CHEBI:37565"/>
    </ligand>
</feature>
<evidence type="ECO:0000255" key="1">
    <source>
        <dbReference type="HAMAP-Rule" id="MF_00071"/>
    </source>
</evidence>
<gene>
    <name evidence="1" type="primary">lepA</name>
    <name type="ordered locus">CYB_0064</name>
</gene>
<name>LEPA_SYNJB</name>
<proteinExistence type="inferred from homology"/>
<reference key="1">
    <citation type="journal article" date="2007" name="ISME J.">
        <title>Population level functional diversity in a microbial community revealed by comparative genomic and metagenomic analyses.</title>
        <authorList>
            <person name="Bhaya D."/>
            <person name="Grossman A.R."/>
            <person name="Steunou A.-S."/>
            <person name="Khuri N."/>
            <person name="Cohan F.M."/>
            <person name="Hamamura N."/>
            <person name="Melendrez M.C."/>
            <person name="Bateson M.M."/>
            <person name="Ward D.M."/>
            <person name="Heidelberg J.F."/>
        </authorList>
    </citation>
    <scope>NUCLEOTIDE SEQUENCE [LARGE SCALE GENOMIC DNA]</scope>
    <source>
        <strain>JA-2-3B'a(2-13)</strain>
    </source>
</reference>